<keyword id="KW-0119">Carbohydrate metabolism</keyword>
<keyword id="KW-0963">Cytoplasm</keyword>
<keyword id="KW-0378">Hydrolase</keyword>
<keyword id="KW-0460">Magnesium</keyword>
<keyword id="KW-0479">Metal-binding</keyword>
<proteinExistence type="inferred from homology"/>
<dbReference type="EC" id="3.1.3.11" evidence="1"/>
<dbReference type="EMBL" id="CP000086">
    <property type="protein sequence ID" value="ABC37614.1"/>
    <property type="molecule type" value="Genomic_DNA"/>
</dbReference>
<dbReference type="RefSeq" id="WP_009889785.1">
    <property type="nucleotide sequence ID" value="NZ_CP008785.1"/>
</dbReference>
<dbReference type="SMR" id="Q2SY57"/>
<dbReference type="GeneID" id="45121338"/>
<dbReference type="KEGG" id="bte:BTH_I1604"/>
<dbReference type="HOGENOM" id="CLU_039977_0_0_4"/>
<dbReference type="UniPathway" id="UPA00138"/>
<dbReference type="Proteomes" id="UP000001930">
    <property type="component" value="Chromosome I"/>
</dbReference>
<dbReference type="GO" id="GO:0005829">
    <property type="term" value="C:cytosol"/>
    <property type="evidence" value="ECO:0007669"/>
    <property type="project" value="TreeGrafter"/>
</dbReference>
<dbReference type="GO" id="GO:0042132">
    <property type="term" value="F:fructose 1,6-bisphosphate 1-phosphatase activity"/>
    <property type="evidence" value="ECO:0007669"/>
    <property type="project" value="UniProtKB-UniRule"/>
</dbReference>
<dbReference type="GO" id="GO:0000287">
    <property type="term" value="F:magnesium ion binding"/>
    <property type="evidence" value="ECO:0007669"/>
    <property type="project" value="UniProtKB-UniRule"/>
</dbReference>
<dbReference type="GO" id="GO:0030388">
    <property type="term" value="P:fructose 1,6-bisphosphate metabolic process"/>
    <property type="evidence" value="ECO:0007669"/>
    <property type="project" value="TreeGrafter"/>
</dbReference>
<dbReference type="GO" id="GO:0006002">
    <property type="term" value="P:fructose 6-phosphate metabolic process"/>
    <property type="evidence" value="ECO:0007669"/>
    <property type="project" value="TreeGrafter"/>
</dbReference>
<dbReference type="GO" id="GO:0006000">
    <property type="term" value="P:fructose metabolic process"/>
    <property type="evidence" value="ECO:0007669"/>
    <property type="project" value="TreeGrafter"/>
</dbReference>
<dbReference type="GO" id="GO:0006094">
    <property type="term" value="P:gluconeogenesis"/>
    <property type="evidence" value="ECO:0007669"/>
    <property type="project" value="UniProtKB-UniRule"/>
</dbReference>
<dbReference type="GO" id="GO:0005986">
    <property type="term" value="P:sucrose biosynthetic process"/>
    <property type="evidence" value="ECO:0007669"/>
    <property type="project" value="TreeGrafter"/>
</dbReference>
<dbReference type="CDD" id="cd00354">
    <property type="entry name" value="FBPase"/>
    <property type="match status" value="1"/>
</dbReference>
<dbReference type="FunFam" id="3.30.540.10:FF:000006">
    <property type="entry name" value="Fructose-1,6-bisphosphatase class 1"/>
    <property type="match status" value="1"/>
</dbReference>
<dbReference type="FunFam" id="3.40.190.80:FF:000011">
    <property type="entry name" value="Fructose-1,6-bisphosphatase class 1"/>
    <property type="match status" value="1"/>
</dbReference>
<dbReference type="Gene3D" id="3.40.190.80">
    <property type="match status" value="1"/>
</dbReference>
<dbReference type="Gene3D" id="3.30.540.10">
    <property type="entry name" value="Fructose-1,6-Bisphosphatase, subunit A, domain 1"/>
    <property type="match status" value="1"/>
</dbReference>
<dbReference type="HAMAP" id="MF_01855">
    <property type="entry name" value="FBPase_class1"/>
    <property type="match status" value="1"/>
</dbReference>
<dbReference type="InterPro" id="IPR044015">
    <property type="entry name" value="FBPase_C_dom"/>
</dbReference>
<dbReference type="InterPro" id="IPR000146">
    <property type="entry name" value="FBPase_class-1"/>
</dbReference>
<dbReference type="InterPro" id="IPR033391">
    <property type="entry name" value="FBPase_N"/>
</dbReference>
<dbReference type="InterPro" id="IPR028343">
    <property type="entry name" value="FBPtase"/>
</dbReference>
<dbReference type="NCBIfam" id="NF006778">
    <property type="entry name" value="PRK09293.1-1"/>
    <property type="match status" value="1"/>
</dbReference>
<dbReference type="NCBIfam" id="NF006779">
    <property type="entry name" value="PRK09293.1-3"/>
    <property type="match status" value="1"/>
</dbReference>
<dbReference type="NCBIfam" id="NF006780">
    <property type="entry name" value="PRK09293.1-4"/>
    <property type="match status" value="1"/>
</dbReference>
<dbReference type="PANTHER" id="PTHR11556">
    <property type="entry name" value="FRUCTOSE-1,6-BISPHOSPHATASE-RELATED"/>
    <property type="match status" value="1"/>
</dbReference>
<dbReference type="PANTHER" id="PTHR11556:SF35">
    <property type="entry name" value="SEDOHEPTULOSE-1,7-BISPHOSPHATASE, CHLOROPLASTIC"/>
    <property type="match status" value="1"/>
</dbReference>
<dbReference type="Pfam" id="PF00316">
    <property type="entry name" value="FBPase"/>
    <property type="match status" value="1"/>
</dbReference>
<dbReference type="Pfam" id="PF18913">
    <property type="entry name" value="FBPase_C"/>
    <property type="match status" value="1"/>
</dbReference>
<dbReference type="PIRSF" id="PIRSF500210">
    <property type="entry name" value="FBPtase"/>
    <property type="match status" value="1"/>
</dbReference>
<dbReference type="PIRSF" id="PIRSF000904">
    <property type="entry name" value="FBPtase_SBPase"/>
    <property type="match status" value="1"/>
</dbReference>
<dbReference type="PRINTS" id="PR00115">
    <property type="entry name" value="F16BPHPHTASE"/>
</dbReference>
<dbReference type="SUPFAM" id="SSF56655">
    <property type="entry name" value="Carbohydrate phosphatase"/>
    <property type="match status" value="1"/>
</dbReference>
<sequence length="338" mass="37349">MSITRRTTLSKYLIEQQRETHNLPADLRLLIEVVARACKAISYNVSKGALGDALGTAGSENVQGEVQKKLDILSNEILLDANEWGGNLAAMASEEMETFFPIPANYPRGEYLLVFDPLDGSSNIDVNVSIGTIFSVLRCPDGQQATEQSFLQPGTEQVAAGYAVYGPQTVFVLTTGNGVNCFTLDREVGSWVLTQSNLRIPEDTREYAINASNARHWYDPVKRYVDELNAGAEGPRGENFNMRWIASMVADVHRILNRGGIFMYPADKRTPDRPGKLRLMYEANPMSFIVEQAGGAATTGLKRILDVQPTGLHQRVPVILGSKNEVERVARYHQEAQS</sequence>
<gene>
    <name evidence="1" type="primary">fbp</name>
    <name type="ordered locus">BTH_I1604</name>
</gene>
<reference key="1">
    <citation type="journal article" date="2005" name="BMC Genomics">
        <title>Bacterial genome adaptation to niches: divergence of the potential virulence genes in three Burkholderia species of different survival strategies.</title>
        <authorList>
            <person name="Kim H.S."/>
            <person name="Schell M.A."/>
            <person name="Yu Y."/>
            <person name="Ulrich R.L."/>
            <person name="Sarria S.H."/>
            <person name="Nierman W.C."/>
            <person name="DeShazer D."/>
        </authorList>
    </citation>
    <scope>NUCLEOTIDE SEQUENCE [LARGE SCALE GENOMIC DNA]</scope>
    <source>
        <strain>ATCC 700388 / DSM 13276 / CCUG 48851 / CIP 106301 / E264</strain>
    </source>
</reference>
<protein>
    <recommendedName>
        <fullName evidence="1">Fructose-1,6-bisphosphatase class 1</fullName>
        <shortName evidence="1">FBPase class 1</shortName>
        <ecNumber evidence="1">3.1.3.11</ecNumber>
    </recommendedName>
    <alternativeName>
        <fullName evidence="1">D-fructose-1,6-bisphosphate 1-phosphohydrolase class 1</fullName>
    </alternativeName>
</protein>
<accession>Q2SY57</accession>
<name>F16PA_BURTA</name>
<comment type="catalytic activity">
    <reaction evidence="1">
        <text>beta-D-fructose 1,6-bisphosphate + H2O = beta-D-fructose 6-phosphate + phosphate</text>
        <dbReference type="Rhea" id="RHEA:11064"/>
        <dbReference type="ChEBI" id="CHEBI:15377"/>
        <dbReference type="ChEBI" id="CHEBI:32966"/>
        <dbReference type="ChEBI" id="CHEBI:43474"/>
        <dbReference type="ChEBI" id="CHEBI:57634"/>
        <dbReference type="EC" id="3.1.3.11"/>
    </reaction>
</comment>
<comment type="cofactor">
    <cofactor evidence="1">
        <name>Mg(2+)</name>
        <dbReference type="ChEBI" id="CHEBI:18420"/>
    </cofactor>
    <text evidence="1">Binds 2 magnesium ions per subunit.</text>
</comment>
<comment type="pathway">
    <text evidence="1">Carbohydrate biosynthesis; gluconeogenesis.</text>
</comment>
<comment type="subunit">
    <text evidence="1">Homotetramer.</text>
</comment>
<comment type="subcellular location">
    <subcellularLocation>
        <location evidence="1">Cytoplasm</location>
    </subcellularLocation>
</comment>
<comment type="similarity">
    <text evidence="1">Belongs to the FBPase class 1 family.</text>
</comment>
<evidence type="ECO:0000255" key="1">
    <source>
        <dbReference type="HAMAP-Rule" id="MF_01855"/>
    </source>
</evidence>
<organism>
    <name type="scientific">Burkholderia thailandensis (strain ATCC 700388 / DSM 13276 / CCUG 48851 / CIP 106301 / E264)</name>
    <dbReference type="NCBI Taxonomy" id="271848"/>
    <lineage>
        <taxon>Bacteria</taxon>
        <taxon>Pseudomonadati</taxon>
        <taxon>Pseudomonadota</taxon>
        <taxon>Betaproteobacteria</taxon>
        <taxon>Burkholderiales</taxon>
        <taxon>Burkholderiaceae</taxon>
        <taxon>Burkholderia</taxon>
        <taxon>pseudomallei group</taxon>
    </lineage>
</organism>
<feature type="chain" id="PRO_0000364504" description="Fructose-1,6-bisphosphatase class 1">
    <location>
        <begin position="1"/>
        <end position="338"/>
    </location>
</feature>
<feature type="binding site" evidence="1">
    <location>
        <position position="94"/>
    </location>
    <ligand>
        <name>Mg(2+)</name>
        <dbReference type="ChEBI" id="CHEBI:18420"/>
        <label>1</label>
    </ligand>
</feature>
<feature type="binding site" evidence="1">
    <location>
        <position position="116"/>
    </location>
    <ligand>
        <name>Mg(2+)</name>
        <dbReference type="ChEBI" id="CHEBI:18420"/>
        <label>1</label>
    </ligand>
</feature>
<feature type="binding site" evidence="1">
    <location>
        <position position="116"/>
    </location>
    <ligand>
        <name>Mg(2+)</name>
        <dbReference type="ChEBI" id="CHEBI:18420"/>
        <label>2</label>
    </ligand>
</feature>
<feature type="binding site" evidence="1">
    <location>
        <position position="118"/>
    </location>
    <ligand>
        <name>Mg(2+)</name>
        <dbReference type="ChEBI" id="CHEBI:18420"/>
        <label>1</label>
    </ligand>
</feature>
<feature type="binding site" evidence="1">
    <location>
        <begin position="119"/>
        <end position="122"/>
    </location>
    <ligand>
        <name>substrate</name>
    </ligand>
</feature>
<feature type="binding site" evidence="1">
    <location>
        <position position="119"/>
    </location>
    <ligand>
        <name>Mg(2+)</name>
        <dbReference type="ChEBI" id="CHEBI:18420"/>
        <label>2</label>
    </ligand>
</feature>
<feature type="binding site" evidence="1">
    <location>
        <position position="210"/>
    </location>
    <ligand>
        <name>substrate</name>
    </ligand>
</feature>
<feature type="binding site" evidence="1">
    <location>
        <position position="276"/>
    </location>
    <ligand>
        <name>substrate</name>
    </ligand>
</feature>
<feature type="binding site" evidence="1">
    <location>
        <position position="282"/>
    </location>
    <ligand>
        <name>Mg(2+)</name>
        <dbReference type="ChEBI" id="CHEBI:18420"/>
        <label>2</label>
    </ligand>
</feature>